<accession>Q8TTB0</accession>
<organism>
    <name type="scientific">Methanosarcina acetivorans (strain ATCC 35395 / DSM 2834 / JCM 12185 / C2A)</name>
    <dbReference type="NCBI Taxonomy" id="188937"/>
    <lineage>
        <taxon>Archaea</taxon>
        <taxon>Methanobacteriati</taxon>
        <taxon>Methanobacteriota</taxon>
        <taxon>Stenosarchaea group</taxon>
        <taxon>Methanomicrobia</taxon>
        <taxon>Methanosarcinales</taxon>
        <taxon>Methanosarcinaceae</taxon>
        <taxon>Methanosarcina</taxon>
    </lineage>
</organism>
<comment type="function">
    <text evidence="1">Acts as a methyl group carrier between MtbB and MtbA.</text>
</comment>
<comment type="pathway">
    <text>One-carbon metabolism; methanogenesis from dimethylamine.</text>
</comment>
<comment type="similarity">
    <text evidence="4">Belongs to the methylamine corrinoid protein family.</text>
</comment>
<dbReference type="EMBL" id="AE010299">
    <property type="protein sequence ID" value="AAM03971.1"/>
    <property type="molecule type" value="Genomic_DNA"/>
</dbReference>
<dbReference type="RefSeq" id="WP_011020576.1">
    <property type="nucleotide sequence ID" value="NC_003552.1"/>
</dbReference>
<dbReference type="SMR" id="Q8TTB0"/>
<dbReference type="STRING" id="188937.MA_0527"/>
<dbReference type="EnsemblBacteria" id="AAM03971">
    <property type="protein sequence ID" value="AAM03971"/>
    <property type="gene ID" value="MA_0527"/>
</dbReference>
<dbReference type="GeneID" id="1472419"/>
<dbReference type="KEGG" id="mac:MA_0527"/>
<dbReference type="HOGENOM" id="CLU_082102_1_0_2"/>
<dbReference type="InParanoid" id="Q8TTB0"/>
<dbReference type="OrthoDB" id="134276at2157"/>
<dbReference type="PhylomeDB" id="Q8TTB0"/>
<dbReference type="UniPathway" id="UPA00644"/>
<dbReference type="Proteomes" id="UP000002487">
    <property type="component" value="Chromosome"/>
</dbReference>
<dbReference type="GO" id="GO:0031419">
    <property type="term" value="F:cobalamin binding"/>
    <property type="evidence" value="ECO:0007669"/>
    <property type="project" value="InterPro"/>
</dbReference>
<dbReference type="GO" id="GO:0050897">
    <property type="term" value="F:cobalt ion binding"/>
    <property type="evidence" value="ECO:0007669"/>
    <property type="project" value="InterPro"/>
</dbReference>
<dbReference type="GO" id="GO:0008168">
    <property type="term" value="F:methyltransferase activity"/>
    <property type="evidence" value="ECO:0007669"/>
    <property type="project" value="UniProtKB-ARBA"/>
</dbReference>
<dbReference type="GO" id="GO:0015948">
    <property type="term" value="P:methanogenesis"/>
    <property type="evidence" value="ECO:0007669"/>
    <property type="project" value="UniProtKB-KW"/>
</dbReference>
<dbReference type="CDD" id="cd02070">
    <property type="entry name" value="corrinoid_protein_B12-BD"/>
    <property type="match status" value="1"/>
</dbReference>
<dbReference type="FunFam" id="3.40.50.280:FF:000003">
    <property type="entry name" value="Dimethylamine methyltransferase corrinoid protein"/>
    <property type="match status" value="1"/>
</dbReference>
<dbReference type="FunFam" id="1.10.1240.10:FF:000004">
    <property type="entry name" value="Monomethylamine methyltransferase corrinoid protein"/>
    <property type="match status" value="1"/>
</dbReference>
<dbReference type="Gene3D" id="3.40.50.280">
    <property type="entry name" value="Cobalamin-binding domain"/>
    <property type="match status" value="1"/>
</dbReference>
<dbReference type="Gene3D" id="1.10.1240.10">
    <property type="entry name" value="Methionine synthase domain"/>
    <property type="match status" value="1"/>
</dbReference>
<dbReference type="InterPro" id="IPR003759">
    <property type="entry name" value="Cbl-bd_cap"/>
</dbReference>
<dbReference type="InterPro" id="IPR006158">
    <property type="entry name" value="Cobalamin-bd"/>
</dbReference>
<dbReference type="InterPro" id="IPR036724">
    <property type="entry name" value="Cobalamin-bd_sf"/>
</dbReference>
<dbReference type="InterPro" id="IPR012741">
    <property type="entry name" value="Corrinoid_p"/>
</dbReference>
<dbReference type="InterPro" id="IPR048095">
    <property type="entry name" value="Dimeth_corrin_MtbC"/>
</dbReference>
<dbReference type="InterPro" id="IPR050554">
    <property type="entry name" value="Met_Synthase/Corrinoid"/>
</dbReference>
<dbReference type="InterPro" id="IPR036594">
    <property type="entry name" value="Meth_synthase_dom"/>
</dbReference>
<dbReference type="NCBIfam" id="NF041607">
    <property type="entry name" value="dimeth_corrin_MtbC"/>
    <property type="match status" value="1"/>
</dbReference>
<dbReference type="NCBIfam" id="TIGR02370">
    <property type="entry name" value="pyl_corrinoid"/>
    <property type="match status" value="1"/>
</dbReference>
<dbReference type="PANTHER" id="PTHR45833">
    <property type="entry name" value="METHIONINE SYNTHASE"/>
    <property type="match status" value="1"/>
</dbReference>
<dbReference type="PANTHER" id="PTHR45833:SF1">
    <property type="entry name" value="METHIONINE SYNTHASE"/>
    <property type="match status" value="1"/>
</dbReference>
<dbReference type="Pfam" id="PF02310">
    <property type="entry name" value="B12-binding"/>
    <property type="match status" value="1"/>
</dbReference>
<dbReference type="Pfam" id="PF02607">
    <property type="entry name" value="B12-binding_2"/>
    <property type="match status" value="1"/>
</dbReference>
<dbReference type="SMART" id="SM01018">
    <property type="entry name" value="B12-binding_2"/>
    <property type="match status" value="1"/>
</dbReference>
<dbReference type="SUPFAM" id="SSF52242">
    <property type="entry name" value="Cobalamin (vitamin B12)-binding domain"/>
    <property type="match status" value="1"/>
</dbReference>
<dbReference type="SUPFAM" id="SSF47644">
    <property type="entry name" value="Methionine synthase domain"/>
    <property type="match status" value="1"/>
</dbReference>
<dbReference type="PROSITE" id="PS51332">
    <property type="entry name" value="B12_BINDING"/>
    <property type="match status" value="1"/>
</dbReference>
<dbReference type="PROSITE" id="PS51337">
    <property type="entry name" value="B12_BINDING_NTER"/>
    <property type="match status" value="1"/>
</dbReference>
<feature type="chain" id="PRO_0000216475" description="Dimethylamine corrinoid protein 1">
    <location>
        <begin position="1"/>
        <end position="213"/>
    </location>
</feature>
<feature type="domain" description="B12-binding N-terminal" evidence="3">
    <location>
        <begin position="1"/>
        <end position="90"/>
    </location>
</feature>
<feature type="domain" description="B12-binding" evidence="2">
    <location>
        <begin position="91"/>
        <end position="213"/>
    </location>
</feature>
<feature type="binding site" description="axial binding residue" evidence="1">
    <location>
        <position position="104"/>
    </location>
    <ligand>
        <name>methylcob(III)alamin</name>
        <dbReference type="ChEBI" id="CHEBI:28115"/>
    </ligand>
    <ligandPart>
        <name>Co</name>
        <dbReference type="ChEBI" id="CHEBI:27638"/>
    </ligandPart>
</feature>
<reference key="1">
    <citation type="journal article" date="2002" name="Genome Res.">
        <title>The genome of Methanosarcina acetivorans reveals extensive metabolic and physiological diversity.</title>
        <authorList>
            <person name="Galagan J.E."/>
            <person name="Nusbaum C."/>
            <person name="Roy A."/>
            <person name="Endrizzi M.G."/>
            <person name="Macdonald P."/>
            <person name="FitzHugh W."/>
            <person name="Calvo S."/>
            <person name="Engels R."/>
            <person name="Smirnov S."/>
            <person name="Atnoor D."/>
            <person name="Brown A."/>
            <person name="Allen N."/>
            <person name="Naylor J."/>
            <person name="Stange-Thomann N."/>
            <person name="DeArellano K."/>
            <person name="Johnson R."/>
            <person name="Linton L."/>
            <person name="McEwan P."/>
            <person name="McKernan K."/>
            <person name="Talamas J."/>
            <person name="Tirrell A."/>
            <person name="Ye W."/>
            <person name="Zimmer A."/>
            <person name="Barber R.D."/>
            <person name="Cann I."/>
            <person name="Graham D.E."/>
            <person name="Grahame D.A."/>
            <person name="Guss A.M."/>
            <person name="Hedderich R."/>
            <person name="Ingram-Smith C."/>
            <person name="Kuettner H.C."/>
            <person name="Krzycki J.A."/>
            <person name="Leigh J.A."/>
            <person name="Li W."/>
            <person name="Liu J."/>
            <person name="Mukhopadhyay B."/>
            <person name="Reeve J.N."/>
            <person name="Smith K."/>
            <person name="Springer T.A."/>
            <person name="Umayam L.A."/>
            <person name="White O."/>
            <person name="White R.H."/>
            <person name="de Macario E.C."/>
            <person name="Ferry J.G."/>
            <person name="Jarrell K.F."/>
            <person name="Jing H."/>
            <person name="Macario A.J.L."/>
            <person name="Paulsen I.T."/>
            <person name="Pritchett M."/>
            <person name="Sowers K.R."/>
            <person name="Swanson R.V."/>
            <person name="Zinder S.H."/>
            <person name="Lander E."/>
            <person name="Metcalf W.W."/>
            <person name="Birren B."/>
        </authorList>
    </citation>
    <scope>NUCLEOTIDE SEQUENCE [LARGE SCALE GENOMIC DNA]</scope>
    <source>
        <strain>ATCC 35395 / DSM 2834 / JCM 12185 / C2A</strain>
    </source>
</reference>
<name>MTBC1_METAC</name>
<gene>
    <name type="primary">mtbC1</name>
    <name type="ordered locus">MA_0527</name>
</gene>
<protein>
    <recommendedName>
        <fullName>Dimethylamine corrinoid protein 1</fullName>
    </recommendedName>
</protein>
<proteinExistence type="inferred from homology"/>
<keyword id="KW-0170">Cobalt</keyword>
<keyword id="KW-0479">Metal-binding</keyword>
<keyword id="KW-0484">Methanogenesis</keyword>
<keyword id="KW-1185">Reference proteome</keyword>
<keyword id="KW-0677">Repeat</keyword>
<sequence length="213" mass="22436">MSKEELLQELAGAVITCKKDAVLAAVEKAKGELDPSEIIEKGLAAGMNEVGVLFERGKLFLPHVMMAADAMTAGVEALKDLMPEGSASSKMGVIVNGTVEGDVHDIGKSIVSTMLQSAGFEVHDIGRDVPIKNFVEKAKEVNADMIGLSALMTTTLPGQRDVIELLKEEGLRENVKVMIGGAPATQAWADKIGADCYAENASEAVAKAKELLA</sequence>
<evidence type="ECO:0000250" key="1"/>
<evidence type="ECO:0000255" key="2">
    <source>
        <dbReference type="PROSITE-ProRule" id="PRU00666"/>
    </source>
</evidence>
<evidence type="ECO:0000255" key="3">
    <source>
        <dbReference type="PROSITE-ProRule" id="PRU00667"/>
    </source>
</evidence>
<evidence type="ECO:0000305" key="4"/>